<organism>
    <name type="scientific">Spinacia oleracea</name>
    <name type="common">Spinach</name>
    <dbReference type="NCBI Taxonomy" id="3562"/>
    <lineage>
        <taxon>Eukaryota</taxon>
        <taxon>Viridiplantae</taxon>
        <taxon>Streptophyta</taxon>
        <taxon>Embryophyta</taxon>
        <taxon>Tracheophyta</taxon>
        <taxon>Spermatophyta</taxon>
        <taxon>Magnoliopsida</taxon>
        <taxon>eudicotyledons</taxon>
        <taxon>Gunneridae</taxon>
        <taxon>Pentapetalae</taxon>
        <taxon>Caryophyllales</taxon>
        <taxon>Chenopodiaceae</taxon>
        <taxon>Chenopodioideae</taxon>
        <taxon>Anserineae</taxon>
        <taxon>Spinacia</taxon>
    </lineage>
</organism>
<dbReference type="EMBL" id="AJ400848">
    <property type="protein sequence ID" value="CAB88749.1"/>
    <property type="molecule type" value="Genomic_DNA"/>
</dbReference>
<dbReference type="PIR" id="S26230">
    <property type="entry name" value="S26230"/>
</dbReference>
<dbReference type="RefSeq" id="NP_054956.1">
    <property type="nucleotide sequence ID" value="NC_002202.1"/>
</dbReference>
<dbReference type="PDB" id="4V61">
    <property type="method" value="EM"/>
    <property type="resolution" value="9.40 A"/>
    <property type="chains" value="B3=1-66"/>
</dbReference>
<dbReference type="PDB" id="5H1S">
    <property type="method" value="EM"/>
    <property type="resolution" value="3.50 A"/>
    <property type="chains" value="c=2-66"/>
</dbReference>
<dbReference type="PDB" id="5MLC">
    <property type="method" value="EM"/>
    <property type="resolution" value="3.90 A"/>
    <property type="chains" value="3=1-66"/>
</dbReference>
<dbReference type="PDB" id="5MMI">
    <property type="method" value="EM"/>
    <property type="resolution" value="3.25 A"/>
    <property type="chains" value="2=1-66"/>
</dbReference>
<dbReference type="PDB" id="5MMM">
    <property type="method" value="EM"/>
    <property type="resolution" value="3.40 A"/>
    <property type="chains" value="2=1-66"/>
</dbReference>
<dbReference type="PDB" id="5X8P">
    <property type="method" value="EM"/>
    <property type="resolution" value="3.40 A"/>
    <property type="chains" value="2=2-66"/>
</dbReference>
<dbReference type="PDB" id="5X8T">
    <property type="method" value="EM"/>
    <property type="resolution" value="3.30 A"/>
    <property type="chains" value="2=2-66"/>
</dbReference>
<dbReference type="PDB" id="6ERI">
    <property type="method" value="EM"/>
    <property type="resolution" value="3.00 A"/>
    <property type="chains" value="Ab=6-65"/>
</dbReference>
<dbReference type="PDBsum" id="4V61"/>
<dbReference type="PDBsum" id="5H1S"/>
<dbReference type="PDBsum" id="5MLC"/>
<dbReference type="PDBsum" id="5MMI"/>
<dbReference type="PDBsum" id="5MMM"/>
<dbReference type="PDBsum" id="5X8P"/>
<dbReference type="PDBsum" id="5X8T"/>
<dbReference type="PDBsum" id="6ERI"/>
<dbReference type="EMDB" id="EMD-3525"/>
<dbReference type="EMDB" id="EMD-3531"/>
<dbReference type="EMDB" id="EMD-3533"/>
<dbReference type="EMDB" id="EMD-3941"/>
<dbReference type="EMDB" id="EMD-6709"/>
<dbReference type="EMDB" id="EMD-6711"/>
<dbReference type="EMDB" id="EMD-9572"/>
<dbReference type="SMR" id="P28805"/>
<dbReference type="FunCoup" id="P28805">
    <property type="interactions" value="34"/>
</dbReference>
<dbReference type="IntAct" id="P28805">
    <property type="interactions" value="1"/>
</dbReference>
<dbReference type="STRING" id="3562.P28805"/>
<dbReference type="GeneID" id="2715629"/>
<dbReference type="KEGG" id="soe:2715629"/>
<dbReference type="InParanoid" id="P28805"/>
<dbReference type="OrthoDB" id="361870at2759"/>
<dbReference type="Proteomes" id="UP001155700">
    <property type="component" value="Chloroplast Pltd"/>
</dbReference>
<dbReference type="GO" id="GO:0009507">
    <property type="term" value="C:chloroplast"/>
    <property type="evidence" value="ECO:0007669"/>
    <property type="project" value="UniProtKB-SubCell"/>
</dbReference>
<dbReference type="GO" id="GO:1990904">
    <property type="term" value="C:ribonucleoprotein complex"/>
    <property type="evidence" value="ECO:0007669"/>
    <property type="project" value="UniProtKB-KW"/>
</dbReference>
<dbReference type="GO" id="GO:0005840">
    <property type="term" value="C:ribosome"/>
    <property type="evidence" value="ECO:0007669"/>
    <property type="project" value="UniProtKB-KW"/>
</dbReference>
<dbReference type="GO" id="GO:0003735">
    <property type="term" value="F:structural constituent of ribosome"/>
    <property type="evidence" value="ECO:0007669"/>
    <property type="project" value="InterPro"/>
</dbReference>
<dbReference type="GO" id="GO:0006412">
    <property type="term" value="P:translation"/>
    <property type="evidence" value="ECO:0007669"/>
    <property type="project" value="UniProtKB-UniRule"/>
</dbReference>
<dbReference type="Gene3D" id="2.20.28.120">
    <property type="entry name" value="Ribosomal protein L33"/>
    <property type="match status" value="1"/>
</dbReference>
<dbReference type="HAMAP" id="MF_00294">
    <property type="entry name" value="Ribosomal_bL33"/>
    <property type="match status" value="1"/>
</dbReference>
<dbReference type="InterPro" id="IPR001705">
    <property type="entry name" value="Ribosomal_bL33"/>
</dbReference>
<dbReference type="InterPro" id="IPR018264">
    <property type="entry name" value="Ribosomal_bL33_CS"/>
</dbReference>
<dbReference type="InterPro" id="IPR038584">
    <property type="entry name" value="Ribosomal_bL33_sf"/>
</dbReference>
<dbReference type="InterPro" id="IPR011332">
    <property type="entry name" value="Ribosomal_zn-bd"/>
</dbReference>
<dbReference type="NCBIfam" id="NF001764">
    <property type="entry name" value="PRK00504.1"/>
    <property type="match status" value="1"/>
</dbReference>
<dbReference type="NCBIfam" id="NF001860">
    <property type="entry name" value="PRK00595.1"/>
    <property type="match status" value="1"/>
</dbReference>
<dbReference type="NCBIfam" id="TIGR01023">
    <property type="entry name" value="rpmG_bact"/>
    <property type="match status" value="1"/>
</dbReference>
<dbReference type="PANTHER" id="PTHR43168">
    <property type="entry name" value="50S RIBOSOMAL PROTEIN L33, CHLOROPLASTIC"/>
    <property type="match status" value="1"/>
</dbReference>
<dbReference type="PANTHER" id="PTHR43168:SF2">
    <property type="entry name" value="LARGE RIBOSOMAL SUBUNIT PROTEIN BL33C"/>
    <property type="match status" value="1"/>
</dbReference>
<dbReference type="Pfam" id="PF00471">
    <property type="entry name" value="Ribosomal_L33"/>
    <property type="match status" value="1"/>
</dbReference>
<dbReference type="SUPFAM" id="SSF57829">
    <property type="entry name" value="Zn-binding ribosomal proteins"/>
    <property type="match status" value="1"/>
</dbReference>
<dbReference type="PROSITE" id="PS00582">
    <property type="entry name" value="RIBOSOMAL_L33"/>
    <property type="match status" value="1"/>
</dbReference>
<feature type="initiator methionine" description="Removed" evidence="1 2">
    <location>
        <position position="1"/>
    </location>
</feature>
<feature type="chain" id="PRO_0000170303" description="Large ribosomal subunit protein bL33c">
    <location>
        <begin position="2"/>
        <end position="66"/>
    </location>
</feature>
<feature type="sequence conflict" description="In Ref. 2; AA sequence." evidence="6" ref="2">
    <original>S</original>
    <variation>C</variation>
    <location>
        <position position="44"/>
    </location>
</feature>
<feature type="sequence conflict" description="In Ref. 2; AA sequence." evidence="6" ref="2">
    <original>R</original>
    <variation>K</variation>
    <location>
        <position position="49"/>
    </location>
</feature>
<feature type="strand" evidence="9">
    <location>
        <begin position="8"/>
        <end position="15"/>
    </location>
</feature>
<feature type="turn" evidence="9">
    <location>
        <begin position="20"/>
        <end position="22"/>
    </location>
</feature>
<feature type="strand" evidence="9">
    <location>
        <begin position="24"/>
        <end position="27"/>
    </location>
</feature>
<feature type="strand" evidence="9">
    <location>
        <begin position="32"/>
        <end position="38"/>
    </location>
</feature>
<feature type="turn" evidence="9">
    <location>
        <begin position="39"/>
        <end position="41"/>
    </location>
</feature>
<feature type="strand" evidence="9">
    <location>
        <begin position="48"/>
        <end position="51"/>
    </location>
</feature>
<feature type="turn" evidence="9">
    <location>
        <begin position="53"/>
        <end position="55"/>
    </location>
</feature>
<feature type="strand" evidence="9">
    <location>
        <begin position="57"/>
        <end position="63"/>
    </location>
</feature>
<name>RK33_SPIOL</name>
<gene>
    <name type="primary">rpl33</name>
</gene>
<keyword id="KW-0002">3D-structure</keyword>
<keyword id="KW-0150">Chloroplast</keyword>
<keyword id="KW-0903">Direct protein sequencing</keyword>
<keyword id="KW-0934">Plastid</keyword>
<keyword id="KW-1185">Reference proteome</keyword>
<keyword id="KW-0687">Ribonucleoprotein</keyword>
<keyword id="KW-0689">Ribosomal protein</keyword>
<protein>
    <recommendedName>
        <fullName evidence="5">Large ribosomal subunit protein bL33c</fullName>
    </recommendedName>
    <alternativeName>
        <fullName evidence="4">50S ribosomal protein L33, chloroplastic</fullName>
    </alternativeName>
</protein>
<geneLocation type="chloroplast"/>
<evidence type="ECO:0000269" key="1">
    <source>
    </source>
</evidence>
<evidence type="ECO:0000269" key="2">
    <source>
    </source>
</evidence>
<evidence type="ECO:0000269" key="3">
    <source>
    </source>
</evidence>
<evidence type="ECO:0000303" key="4">
    <source>
    </source>
</evidence>
<evidence type="ECO:0000303" key="5">
    <source>
    </source>
</evidence>
<evidence type="ECO:0000305" key="6"/>
<evidence type="ECO:0000305" key="7">
    <source>
    </source>
</evidence>
<evidence type="ECO:0000305" key="8">
    <source>
    </source>
</evidence>
<evidence type="ECO:0007829" key="9">
    <source>
        <dbReference type="PDB" id="5MMI"/>
    </source>
</evidence>
<proteinExistence type="evidence at protein level"/>
<accession>P28805</accession>
<accession>Q9M3K8</accession>
<reference key="1">
    <citation type="journal article" date="2001" name="Plant Mol. Biol.">
        <title>The plastid chromosome of spinach (Spinacia oleracea): complete nucleotide sequence and gene organization.</title>
        <authorList>
            <person name="Schmitz-Linneweber C."/>
            <person name="Maier R.M."/>
            <person name="Alcaraz J.-P."/>
            <person name="Cottet A."/>
            <person name="Herrmann R.G."/>
            <person name="Mache R."/>
        </authorList>
    </citation>
    <scope>NUCLEOTIDE SEQUENCE [LARGE SCALE GENOMIC DNA]</scope>
    <source>
        <strain>cv. Geant d'hiver</strain>
        <strain>cv. Monatol</strain>
    </source>
</reference>
<reference key="2">
    <citation type="journal article" date="1992" name="Plant Mol. Biol.">
        <title>Purification and characterization of seven chloroplast ribosomal proteins: evidence that organelle ribosomal protein genes are functional and that NH2-terminal processing occurs via multiple pathways in chloroplasts.</title>
        <authorList>
            <person name="Schmidt J."/>
            <person name="Herfurth E."/>
            <person name="Subramanian A.R."/>
        </authorList>
    </citation>
    <scope>PROTEIN SEQUENCE OF 2-51</scope>
    <source>
        <strain>cv. Alwaro</strain>
    </source>
</reference>
<reference key="3">
    <citation type="journal article" date="2000" name="J. Biol. Chem.">
        <title>The plastid ribosomal proteins. Identification of all the proteins in the 50S subunit of an organelle ribosome (chloroplast).</title>
        <authorList>
            <person name="Yamaguchi K."/>
            <person name="Subramanian A.R."/>
        </authorList>
    </citation>
    <scope>PROTEIN SEQUENCE OF 2-11</scope>
    <scope>SUBUNIT</scope>
    <scope>SUBCELLULAR LOCATION</scope>
    <scope>MASS SPECTROMETRY</scope>
    <source>
        <strain>cv. Alwaro</strain>
        <tissue>Leaf</tissue>
    </source>
</reference>
<reference key="4">
    <citation type="journal article" date="2007" name="Proc. Natl. Acad. Sci. U.S.A.">
        <title>Cryo-EM study of the spinach chloroplast ribosome reveals the structural and functional roles of plastid-specific ribosomal proteins.</title>
        <authorList>
            <person name="Sharma M.R."/>
            <person name="Wilson D.N."/>
            <person name="Datta P.P."/>
            <person name="Barat C."/>
            <person name="Schluenzen F."/>
            <person name="Fucini P."/>
            <person name="Agrawal R.K."/>
        </authorList>
    </citation>
    <scope>STRUCTURE BY ELECTRON MICROSCOPY (9.4 ANGSTROMS)</scope>
</reference>
<reference key="5">
    <citation type="journal article" date="2016" name="Sci. Rep.">
        <title>Cryo-EM structure of the large subunit of the spinach chloroplast ribosome.</title>
        <authorList>
            <person name="Ahmed T."/>
            <person name="Yin Z."/>
            <person name="Bhushan S."/>
        </authorList>
    </citation>
    <scope>STRUCTURE BY ELECTRON MICROSCOPY (3.50 ANGSTROMS)</scope>
</reference>
<reference key="6">
    <citation type="journal article" date="2017" name="EMBO J.">
        <title>The complete structure of the chloroplast 70S ribosome in complex with translation factor pY.</title>
        <authorList>
            <person name="Bieri P."/>
            <person name="Leibundgut M."/>
            <person name="Saurer M."/>
            <person name="Boehringer D."/>
            <person name="Ban N."/>
        </authorList>
    </citation>
    <scope>STRUCTURE BY ELECTRON MICROSCOPY (3.25 ANGSTROMS)</scope>
    <scope>SUBUNIT</scope>
    <scope>SUBCELLULAR LOCATION</scope>
</reference>
<comment type="function">
    <text evidence="7 8">Component of the chloroplast ribosome (chloro-ribosome), a dedicated translation machinery responsible for the synthesis of chloroplast genome-encoded proteins, including proteins of the transcription and translation machinery and components of the photosynthetic apparatus.</text>
</comment>
<comment type="subunit">
    <text evidence="1 3">Component of the chloroplast large ribosomal subunit (LSU). Mature 70S chloroplast ribosomes of higher plants consist of a small (30S) and a large (50S) subunit. The 30S small subunit contains 1 molecule of ribosomal RNA (16S rRNA) and 24 different proteins. The 50S large subunit contains 3 rRNA molecules (23S, 5S and 4.5S rRNA) and 33 different proteins.</text>
</comment>
<comment type="subcellular location">
    <subcellularLocation>
        <location evidence="1 3">Plastid</location>
        <location evidence="1 3">Chloroplast</location>
    </subcellularLocation>
</comment>
<comment type="mass spectrometry" mass="7515.0" method="Electrospray" evidence="1"/>
<comment type="similarity">
    <text evidence="6">Belongs to the bacterial ribosomal protein bL33 family.</text>
</comment>
<sequence length="66" mass="7648">MAKGKDVRVKVILECTGCVRKSVNKGSRGVSRYITQKNRHNTPSRLELRKFCPYCYKHTIHGEIKK</sequence>